<sequence>MSHIPSELKYATSHEWIRVEANGEAVVGITEHAQDLLGDMVFVDLPEVGKQIGAGDDCAVAESVKAASDIYSPVSGEIVAINEELEGSPELVNSDPYGAGWLFRIKLDDAGELANLLDAEGYQNLVDEE</sequence>
<name>GCSH_AERS4</name>
<protein>
    <recommendedName>
        <fullName evidence="1">Glycine cleavage system H protein</fullName>
    </recommendedName>
</protein>
<accession>A4SP34</accession>
<feature type="chain" id="PRO_0000302342" description="Glycine cleavage system H protein">
    <location>
        <begin position="1"/>
        <end position="129"/>
    </location>
</feature>
<feature type="domain" description="Lipoyl-binding" evidence="2">
    <location>
        <begin position="24"/>
        <end position="106"/>
    </location>
</feature>
<feature type="modified residue" description="N6-lipoyllysine" evidence="1">
    <location>
        <position position="65"/>
    </location>
</feature>
<dbReference type="EMBL" id="CP000644">
    <property type="protein sequence ID" value="ABO90656.1"/>
    <property type="molecule type" value="Genomic_DNA"/>
</dbReference>
<dbReference type="RefSeq" id="WP_005310365.1">
    <property type="nucleotide sequence ID" value="NC_009348.1"/>
</dbReference>
<dbReference type="SMR" id="A4SP34"/>
<dbReference type="STRING" id="29491.GCA_000820065_00250"/>
<dbReference type="KEGG" id="asa:ASA_2632"/>
<dbReference type="eggNOG" id="COG0509">
    <property type="taxonomic scope" value="Bacteria"/>
</dbReference>
<dbReference type="HOGENOM" id="CLU_097408_2_0_6"/>
<dbReference type="Proteomes" id="UP000000225">
    <property type="component" value="Chromosome"/>
</dbReference>
<dbReference type="GO" id="GO:0005829">
    <property type="term" value="C:cytosol"/>
    <property type="evidence" value="ECO:0007669"/>
    <property type="project" value="TreeGrafter"/>
</dbReference>
<dbReference type="GO" id="GO:0005960">
    <property type="term" value="C:glycine cleavage complex"/>
    <property type="evidence" value="ECO:0007669"/>
    <property type="project" value="InterPro"/>
</dbReference>
<dbReference type="GO" id="GO:0019464">
    <property type="term" value="P:glycine decarboxylation via glycine cleavage system"/>
    <property type="evidence" value="ECO:0007669"/>
    <property type="project" value="UniProtKB-UniRule"/>
</dbReference>
<dbReference type="CDD" id="cd06848">
    <property type="entry name" value="GCS_H"/>
    <property type="match status" value="1"/>
</dbReference>
<dbReference type="FunFam" id="2.40.50.100:FF:000011">
    <property type="entry name" value="Glycine cleavage system H protein"/>
    <property type="match status" value="1"/>
</dbReference>
<dbReference type="Gene3D" id="2.40.50.100">
    <property type="match status" value="1"/>
</dbReference>
<dbReference type="HAMAP" id="MF_00272">
    <property type="entry name" value="GcvH"/>
    <property type="match status" value="1"/>
</dbReference>
<dbReference type="InterPro" id="IPR003016">
    <property type="entry name" value="2-oxoA_DH_lipoyl-BS"/>
</dbReference>
<dbReference type="InterPro" id="IPR000089">
    <property type="entry name" value="Biotin_lipoyl"/>
</dbReference>
<dbReference type="InterPro" id="IPR002930">
    <property type="entry name" value="GCV_H"/>
</dbReference>
<dbReference type="InterPro" id="IPR033753">
    <property type="entry name" value="GCV_H/Fam206"/>
</dbReference>
<dbReference type="InterPro" id="IPR017453">
    <property type="entry name" value="GCV_H_sub"/>
</dbReference>
<dbReference type="InterPro" id="IPR011053">
    <property type="entry name" value="Single_hybrid_motif"/>
</dbReference>
<dbReference type="NCBIfam" id="TIGR00527">
    <property type="entry name" value="gcvH"/>
    <property type="match status" value="1"/>
</dbReference>
<dbReference type="NCBIfam" id="NF002270">
    <property type="entry name" value="PRK01202.1"/>
    <property type="match status" value="1"/>
</dbReference>
<dbReference type="PANTHER" id="PTHR11715">
    <property type="entry name" value="GLYCINE CLEAVAGE SYSTEM H PROTEIN"/>
    <property type="match status" value="1"/>
</dbReference>
<dbReference type="PANTHER" id="PTHR11715:SF3">
    <property type="entry name" value="GLYCINE CLEAVAGE SYSTEM H PROTEIN-RELATED"/>
    <property type="match status" value="1"/>
</dbReference>
<dbReference type="Pfam" id="PF01597">
    <property type="entry name" value="GCV_H"/>
    <property type="match status" value="1"/>
</dbReference>
<dbReference type="SUPFAM" id="SSF51230">
    <property type="entry name" value="Single hybrid motif"/>
    <property type="match status" value="1"/>
</dbReference>
<dbReference type="PROSITE" id="PS50968">
    <property type="entry name" value="BIOTINYL_LIPOYL"/>
    <property type="match status" value="1"/>
</dbReference>
<dbReference type="PROSITE" id="PS00189">
    <property type="entry name" value="LIPOYL"/>
    <property type="match status" value="1"/>
</dbReference>
<keyword id="KW-0450">Lipoyl</keyword>
<evidence type="ECO:0000255" key="1">
    <source>
        <dbReference type="HAMAP-Rule" id="MF_00272"/>
    </source>
</evidence>
<evidence type="ECO:0000255" key="2">
    <source>
        <dbReference type="PROSITE-ProRule" id="PRU01066"/>
    </source>
</evidence>
<gene>
    <name evidence="1" type="primary">gcvH</name>
    <name type="ordered locus">ASA_2632</name>
</gene>
<proteinExistence type="inferred from homology"/>
<reference key="1">
    <citation type="journal article" date="2008" name="BMC Genomics">
        <title>The genome of Aeromonas salmonicida subsp. salmonicida A449: insights into the evolution of a fish pathogen.</title>
        <authorList>
            <person name="Reith M.E."/>
            <person name="Singh R.K."/>
            <person name="Curtis B."/>
            <person name="Boyd J.M."/>
            <person name="Bouevitch A."/>
            <person name="Kimball J."/>
            <person name="Munholland J."/>
            <person name="Murphy C."/>
            <person name="Sarty D."/>
            <person name="Williams J."/>
            <person name="Nash J.H."/>
            <person name="Johnson S.C."/>
            <person name="Brown L.L."/>
        </authorList>
    </citation>
    <scope>NUCLEOTIDE SEQUENCE [LARGE SCALE GENOMIC DNA]</scope>
    <source>
        <strain>A449</strain>
    </source>
</reference>
<organism>
    <name type="scientific">Aeromonas salmonicida (strain A449)</name>
    <dbReference type="NCBI Taxonomy" id="382245"/>
    <lineage>
        <taxon>Bacteria</taxon>
        <taxon>Pseudomonadati</taxon>
        <taxon>Pseudomonadota</taxon>
        <taxon>Gammaproteobacteria</taxon>
        <taxon>Aeromonadales</taxon>
        <taxon>Aeromonadaceae</taxon>
        <taxon>Aeromonas</taxon>
    </lineage>
</organism>
<comment type="function">
    <text evidence="1">The glycine cleavage system catalyzes the degradation of glycine. The H protein shuttles the methylamine group of glycine from the P protein to the T protein.</text>
</comment>
<comment type="cofactor">
    <cofactor evidence="1">
        <name>(R)-lipoate</name>
        <dbReference type="ChEBI" id="CHEBI:83088"/>
    </cofactor>
    <text evidence="1">Binds 1 lipoyl cofactor covalently.</text>
</comment>
<comment type="subunit">
    <text evidence="1">The glycine cleavage system is composed of four proteins: P, T, L and H.</text>
</comment>
<comment type="similarity">
    <text evidence="1">Belongs to the GcvH family.</text>
</comment>